<dbReference type="EC" id="2.9.1.1" evidence="1"/>
<dbReference type="EMBL" id="CP000148">
    <property type="protein sequence ID" value="ABB30310.1"/>
    <property type="molecule type" value="Genomic_DNA"/>
</dbReference>
<dbReference type="RefSeq" id="WP_004514185.1">
    <property type="nucleotide sequence ID" value="NC_007517.1"/>
</dbReference>
<dbReference type="SMR" id="Q39ZL4"/>
<dbReference type="STRING" id="269799.Gmet_0061"/>
<dbReference type="DNASU" id="3739677"/>
<dbReference type="KEGG" id="gme:Gmet_0061"/>
<dbReference type="eggNOG" id="COG1921">
    <property type="taxonomic scope" value="Bacteria"/>
</dbReference>
<dbReference type="HOGENOM" id="CLU_038142_1_0_7"/>
<dbReference type="UniPathway" id="UPA00906">
    <property type="reaction ID" value="UER00896"/>
</dbReference>
<dbReference type="Proteomes" id="UP000007073">
    <property type="component" value="Chromosome"/>
</dbReference>
<dbReference type="GO" id="GO:0005737">
    <property type="term" value="C:cytoplasm"/>
    <property type="evidence" value="ECO:0007669"/>
    <property type="project" value="UniProtKB-SubCell"/>
</dbReference>
<dbReference type="GO" id="GO:0004125">
    <property type="term" value="F:L-seryl-tRNA(Sec) selenium transferase activity"/>
    <property type="evidence" value="ECO:0007669"/>
    <property type="project" value="UniProtKB-UniRule"/>
</dbReference>
<dbReference type="GO" id="GO:0001717">
    <property type="term" value="P:conversion of seryl-tRNAsec to selenocys-tRNAsec"/>
    <property type="evidence" value="ECO:0007669"/>
    <property type="project" value="UniProtKB-UniRule"/>
</dbReference>
<dbReference type="GO" id="GO:0001514">
    <property type="term" value="P:selenocysteine incorporation"/>
    <property type="evidence" value="ECO:0007669"/>
    <property type="project" value="UniProtKB-UniRule"/>
</dbReference>
<dbReference type="Gene3D" id="3.90.1150.180">
    <property type="match status" value="1"/>
</dbReference>
<dbReference type="Gene3D" id="3.40.640.10">
    <property type="entry name" value="Type I PLP-dependent aspartate aminotransferase-like (Major domain)"/>
    <property type="match status" value="1"/>
</dbReference>
<dbReference type="HAMAP" id="MF_00423">
    <property type="entry name" value="SelA"/>
    <property type="match status" value="1"/>
</dbReference>
<dbReference type="InterPro" id="IPR015424">
    <property type="entry name" value="PyrdxlP-dep_Trfase"/>
</dbReference>
<dbReference type="InterPro" id="IPR015421">
    <property type="entry name" value="PyrdxlP-dep_Trfase_major"/>
</dbReference>
<dbReference type="InterPro" id="IPR018319">
    <property type="entry name" value="SelA-like"/>
</dbReference>
<dbReference type="InterPro" id="IPR004534">
    <property type="entry name" value="SelA_trans"/>
</dbReference>
<dbReference type="InterPro" id="IPR025862">
    <property type="entry name" value="SelA_trans_N_dom"/>
</dbReference>
<dbReference type="NCBIfam" id="TIGR00474">
    <property type="entry name" value="selA"/>
    <property type="match status" value="1"/>
</dbReference>
<dbReference type="PANTHER" id="PTHR32328">
    <property type="entry name" value="L-SERYL-TRNA(SEC) SELENIUM TRANSFERASE"/>
    <property type="match status" value="1"/>
</dbReference>
<dbReference type="PANTHER" id="PTHR32328:SF0">
    <property type="entry name" value="L-SERYL-TRNA(SEC) SELENIUM TRANSFERASE"/>
    <property type="match status" value="1"/>
</dbReference>
<dbReference type="Pfam" id="PF12390">
    <property type="entry name" value="Se-cys_synth_N"/>
    <property type="match status" value="1"/>
</dbReference>
<dbReference type="Pfam" id="PF03841">
    <property type="entry name" value="SelA"/>
    <property type="match status" value="1"/>
</dbReference>
<dbReference type="SUPFAM" id="SSF53383">
    <property type="entry name" value="PLP-dependent transferases"/>
    <property type="match status" value="1"/>
</dbReference>
<accession>Q39ZL4</accession>
<protein>
    <recommendedName>
        <fullName evidence="1">L-seryl-tRNA(Sec) selenium transferase</fullName>
        <ecNumber evidence="1">2.9.1.1</ecNumber>
    </recommendedName>
    <alternativeName>
        <fullName evidence="1">Selenocysteine synthase</fullName>
        <shortName evidence="1">Sec synthase</shortName>
    </alternativeName>
    <alternativeName>
        <fullName evidence="1">Selenocysteinyl-tRNA(Sec) synthase</fullName>
    </alternativeName>
</protein>
<proteinExistence type="inferred from homology"/>
<gene>
    <name evidence="1" type="primary">selA</name>
    <name type="ordered locus">Gmet_0061</name>
</gene>
<feature type="chain" id="PRO_1000050366" description="L-seryl-tRNA(Sec) selenium transferase">
    <location>
        <begin position="1"/>
        <end position="462"/>
    </location>
</feature>
<feature type="modified residue" description="N6-(pyridoxal phosphate)lysine" evidence="1">
    <location>
        <position position="292"/>
    </location>
</feature>
<name>SELA_GEOMG</name>
<sequence>MTLFARIPKVDKILEWDGTKVLLGIHPRPTVLNAVRSVLDSLRTAARSGFLKEEELLEGAVASRIEREVARSTAFSLRRVVNGTGVVIHTNLGRSPLSKRVKPLLDEIAFGYSNLEFDLEKGERGSRYSHVERLLCDLTGAEAALVVNNNAAAVLLALSALAAGKEVVVSRGELVEIGGSFRIPDVMGQGGAILREVGTTNRTHPRDYHQAVSEQTALLLKVHSSNFAVVGFTAEVSATELVAIGKEHSVPVMADIGSGCLLDLSPFGIRGEPTVQEFVKAGVDVITFSGDKLLGGPQAGIIVGRREFIAPLTQHPLLRALRIDKLTLAALEGTLRLYRDERLALAEIPTLRMLTASAAELATRARSFARRIRRASPPDIRLTLTSGISQVGGGAYPLLELPTTLMAMEADGISPQEMEIRLRGMEVPVTGRIHRGRFLLDVRTLQDDDIPFIAAALSSLAD</sequence>
<comment type="function">
    <text evidence="1">Converts seryl-tRNA(Sec) to selenocysteinyl-tRNA(Sec) required for selenoprotein biosynthesis.</text>
</comment>
<comment type="catalytic activity">
    <reaction evidence="1">
        <text>L-seryl-tRNA(Sec) + selenophosphate + H(+) = L-selenocysteinyl-tRNA(Sec) + phosphate</text>
        <dbReference type="Rhea" id="RHEA:22728"/>
        <dbReference type="Rhea" id="RHEA-COMP:9742"/>
        <dbReference type="Rhea" id="RHEA-COMP:9743"/>
        <dbReference type="ChEBI" id="CHEBI:15378"/>
        <dbReference type="ChEBI" id="CHEBI:16144"/>
        <dbReference type="ChEBI" id="CHEBI:43474"/>
        <dbReference type="ChEBI" id="CHEBI:78533"/>
        <dbReference type="ChEBI" id="CHEBI:78573"/>
        <dbReference type="EC" id="2.9.1.1"/>
    </reaction>
</comment>
<comment type="cofactor">
    <cofactor evidence="1">
        <name>pyridoxal 5'-phosphate</name>
        <dbReference type="ChEBI" id="CHEBI:597326"/>
    </cofactor>
</comment>
<comment type="pathway">
    <text evidence="1">Aminoacyl-tRNA biosynthesis; selenocysteinyl-tRNA(Sec) biosynthesis; selenocysteinyl-tRNA(Sec) from L-seryl-tRNA(Sec) (bacterial route): step 1/1.</text>
</comment>
<comment type="subcellular location">
    <subcellularLocation>
        <location evidence="1">Cytoplasm</location>
    </subcellularLocation>
</comment>
<comment type="similarity">
    <text evidence="1">Belongs to the SelA family.</text>
</comment>
<organism>
    <name type="scientific">Geobacter metallireducens (strain ATCC 53774 / DSM 7210 / GS-15)</name>
    <dbReference type="NCBI Taxonomy" id="269799"/>
    <lineage>
        <taxon>Bacteria</taxon>
        <taxon>Pseudomonadati</taxon>
        <taxon>Thermodesulfobacteriota</taxon>
        <taxon>Desulfuromonadia</taxon>
        <taxon>Geobacterales</taxon>
        <taxon>Geobacteraceae</taxon>
        <taxon>Geobacter</taxon>
    </lineage>
</organism>
<keyword id="KW-0963">Cytoplasm</keyword>
<keyword id="KW-0648">Protein biosynthesis</keyword>
<keyword id="KW-0663">Pyridoxal phosphate</keyword>
<keyword id="KW-1185">Reference proteome</keyword>
<keyword id="KW-0711">Selenium</keyword>
<keyword id="KW-0808">Transferase</keyword>
<reference key="1">
    <citation type="journal article" date="2009" name="BMC Microbiol.">
        <title>The genome sequence of Geobacter metallireducens: features of metabolism, physiology and regulation common and dissimilar to Geobacter sulfurreducens.</title>
        <authorList>
            <person name="Aklujkar M."/>
            <person name="Krushkal J."/>
            <person name="DiBartolo G."/>
            <person name="Lapidus A."/>
            <person name="Land M.L."/>
            <person name="Lovley D.R."/>
        </authorList>
    </citation>
    <scope>NUCLEOTIDE SEQUENCE [LARGE SCALE GENOMIC DNA]</scope>
    <source>
        <strain>ATCC 53774 / DSM 7210 / GS-15</strain>
    </source>
</reference>
<evidence type="ECO:0000255" key="1">
    <source>
        <dbReference type="HAMAP-Rule" id="MF_00423"/>
    </source>
</evidence>